<evidence type="ECO:0000250" key="1">
    <source>
        <dbReference type="UniProtKB" id="Q9BY41"/>
    </source>
</evidence>
<evidence type="ECO:0000305" key="2"/>
<reference key="1">
    <citation type="submission" date="2003-08" db="EMBL/GenBank/DDBJ databases">
        <authorList>
            <consortium name="NIH - Zebrafish Gene Collection (ZGC) project"/>
        </authorList>
    </citation>
    <scope>NUCLEOTIDE SEQUENCE [LARGE SCALE MRNA]</scope>
</reference>
<comment type="function">
    <text evidence="1">Histone deacetylase that catalyzes the deacetylation of lysine residues on the N-terminal part of the core histones (H2A, H2B, H3 and H4). Histone deacetylation gives a tag for epigenetic repression and plays an important role in transcriptional regulation, cell cycle progression and developmental events. Histone deacetylases act via the formation of large multiprotein complexes. Also involved in the deacetylation of non-histone proteins. In addition to protein deacetylase activity, also has protein-lysine deacylase activity: acts as a protein decrotonylase by mediating decrotonylation ((2E)-butenoyl) of histones.</text>
</comment>
<comment type="catalytic activity">
    <reaction evidence="1">
        <text>N(6)-acetyl-L-lysyl-[histone] + H2O = L-lysyl-[histone] + acetate</text>
        <dbReference type="Rhea" id="RHEA:58196"/>
        <dbReference type="Rhea" id="RHEA-COMP:9845"/>
        <dbReference type="Rhea" id="RHEA-COMP:11338"/>
        <dbReference type="ChEBI" id="CHEBI:15377"/>
        <dbReference type="ChEBI" id="CHEBI:29969"/>
        <dbReference type="ChEBI" id="CHEBI:30089"/>
        <dbReference type="ChEBI" id="CHEBI:61930"/>
        <dbReference type="EC" id="3.5.1.98"/>
    </reaction>
    <physiologicalReaction direction="left-to-right" evidence="1">
        <dbReference type="Rhea" id="RHEA:58197"/>
    </physiologicalReaction>
</comment>
<comment type="catalytic activity">
    <reaction evidence="1">
        <text>N(6)-acetyl-L-lysyl-[protein] + H2O = L-lysyl-[protein] + acetate</text>
        <dbReference type="Rhea" id="RHEA:58108"/>
        <dbReference type="Rhea" id="RHEA-COMP:9752"/>
        <dbReference type="Rhea" id="RHEA-COMP:10731"/>
        <dbReference type="ChEBI" id="CHEBI:15377"/>
        <dbReference type="ChEBI" id="CHEBI:29969"/>
        <dbReference type="ChEBI" id="CHEBI:30089"/>
        <dbReference type="ChEBI" id="CHEBI:61930"/>
    </reaction>
    <physiologicalReaction direction="left-to-right" evidence="1">
        <dbReference type="Rhea" id="RHEA:58109"/>
    </physiologicalReaction>
</comment>
<comment type="catalytic activity">
    <reaction evidence="1">
        <text>N(6)-(2E)-butenoyl-L-lysyl-[protein] + H2O = (2E)-2-butenoate + L-lysyl-[protein]</text>
        <dbReference type="Rhea" id="RHEA:69172"/>
        <dbReference type="Rhea" id="RHEA-COMP:9752"/>
        <dbReference type="Rhea" id="RHEA-COMP:13707"/>
        <dbReference type="ChEBI" id="CHEBI:15377"/>
        <dbReference type="ChEBI" id="CHEBI:29969"/>
        <dbReference type="ChEBI" id="CHEBI:35899"/>
        <dbReference type="ChEBI" id="CHEBI:137954"/>
    </reaction>
    <physiologicalReaction direction="left-to-right" evidence="1">
        <dbReference type="Rhea" id="RHEA:69173"/>
    </physiologicalReaction>
</comment>
<comment type="cofactor">
    <cofactor evidence="1">
        <name>a divalent metal cation</name>
        <dbReference type="ChEBI" id="CHEBI:60240"/>
    </cofactor>
    <text evidence="1">Binds 1 divalent metal cation per subunit.</text>
</comment>
<comment type="activity regulation">
    <text evidence="1">Its activity is inhibited by trichostatin A (TSA) and butyrate, 2 well known histone deacetylase inhibitors.</text>
</comment>
<comment type="subcellular location">
    <subcellularLocation>
        <location evidence="1">Nucleus</location>
    </subcellularLocation>
    <subcellularLocation>
        <location evidence="1">Chromosome</location>
    </subcellularLocation>
    <subcellularLocation>
        <location evidence="1">Cytoplasm</location>
    </subcellularLocation>
    <text evidence="1">Excluded from the nucleoli. Found in the cytoplasm of cells showing smooth muscle differentiation.</text>
</comment>
<comment type="similarity">
    <text evidence="2">Belongs to the histone deacetylase family. HD type 1 subfamily.</text>
</comment>
<sequence>MSEKSDSNDDKSRTRSVVYVYSPEYIQTCDSLSKVPNRASMVHSLIEAYGLLKYMRVVKPHVASIEEMAVFHTDSYLQHLHKISQDGDNDDPQSADFGLGYDCPVVEGIFDYAAAVGGATLTAAQNLLDGKCDVAINWAGGWHHAKKDEASGSCYVNDAVLGILKLREKYDRVLYVDVDLHHGDGVEDAFSFTSKVMTVSLHKFSPGFFPGTGDVTDTGLGKGRWYAVNVPFEDGVRDDRYCQTFTSVMQEVKALFNPEAVVMQLGADTMAGDPMCSFNMTPVGVAKCLTYILGWELPTLLLGGGGYNLANTARCWTYLTGTVLGQTLSSEIPDHEFFTEYGPDYSLEISPSCRPDRNESQHLERVISTIKGNLKNVV</sequence>
<organism>
    <name type="scientific">Danio rerio</name>
    <name type="common">Zebrafish</name>
    <name type="synonym">Brachydanio rerio</name>
    <dbReference type="NCBI Taxonomy" id="7955"/>
    <lineage>
        <taxon>Eukaryota</taxon>
        <taxon>Metazoa</taxon>
        <taxon>Chordata</taxon>
        <taxon>Craniata</taxon>
        <taxon>Vertebrata</taxon>
        <taxon>Euteleostomi</taxon>
        <taxon>Actinopterygii</taxon>
        <taxon>Neopterygii</taxon>
        <taxon>Teleostei</taxon>
        <taxon>Ostariophysi</taxon>
        <taxon>Cypriniformes</taxon>
        <taxon>Danionidae</taxon>
        <taxon>Danioninae</taxon>
        <taxon>Danio</taxon>
    </lineage>
</organism>
<proteinExistence type="evidence at transcript level"/>
<gene>
    <name type="primary">hdac8</name>
</gene>
<name>HDAC8_DANRE</name>
<keyword id="KW-0156">Chromatin regulator</keyword>
<keyword id="KW-0158">Chromosome</keyword>
<keyword id="KW-0963">Cytoplasm</keyword>
<keyword id="KW-0378">Hydrolase</keyword>
<keyword id="KW-0479">Metal-binding</keyword>
<keyword id="KW-0539">Nucleus</keyword>
<keyword id="KW-1185">Reference proteome</keyword>
<keyword id="KW-0678">Repressor</keyword>
<keyword id="KW-0804">Transcription</keyword>
<keyword id="KW-0805">Transcription regulation</keyword>
<protein>
    <recommendedName>
        <fullName>Histone deacetylase 8</fullName>
        <shortName>HD8</shortName>
        <ecNumber evidence="1">3.5.1.98</ecNumber>
    </recommendedName>
    <alternativeName>
        <fullName evidence="2">Protein deacetylase HDAC8</fullName>
        <ecNumber evidence="1">3.5.1.-</ecNumber>
    </alternativeName>
    <alternativeName>
        <fullName evidence="2">Protein decrotonylase HDAC8</fullName>
        <ecNumber evidence="1">3.5.1.-</ecNumber>
    </alternativeName>
</protein>
<dbReference type="EC" id="3.5.1.98" evidence="1"/>
<dbReference type="EC" id="3.5.1.-" evidence="1"/>
<dbReference type="EMBL" id="BC055541">
    <property type="protein sequence ID" value="AAH55541.1"/>
    <property type="molecule type" value="mRNA"/>
</dbReference>
<dbReference type="RefSeq" id="NP_998596.1">
    <property type="nucleotide sequence ID" value="NM_213431.1"/>
</dbReference>
<dbReference type="SMR" id="Q7SXM0"/>
<dbReference type="FunCoup" id="Q7SXM0">
    <property type="interactions" value="263"/>
</dbReference>
<dbReference type="STRING" id="7955.ENSDARP00000017858"/>
<dbReference type="PaxDb" id="7955-ENSDARP00000077625"/>
<dbReference type="GeneID" id="406740"/>
<dbReference type="KEGG" id="dre:406740"/>
<dbReference type="AGR" id="ZFIN:ZDB-GENE-040426-2772"/>
<dbReference type="CTD" id="55869"/>
<dbReference type="ZFIN" id="ZDB-GENE-040426-2772">
    <property type="gene designation" value="hdac8"/>
</dbReference>
<dbReference type="eggNOG" id="KOG1342">
    <property type="taxonomic scope" value="Eukaryota"/>
</dbReference>
<dbReference type="eggNOG" id="KOG3635">
    <property type="taxonomic scope" value="Eukaryota"/>
</dbReference>
<dbReference type="InParanoid" id="Q7SXM0"/>
<dbReference type="OrthoDB" id="73273at2759"/>
<dbReference type="PhylomeDB" id="Q7SXM0"/>
<dbReference type="Reactome" id="R-DRE-2500257">
    <property type="pathway name" value="Resolution of Sister Chromatid Cohesion"/>
</dbReference>
<dbReference type="Reactome" id="R-DRE-3214815">
    <property type="pathway name" value="HDACs deacetylate histones"/>
</dbReference>
<dbReference type="PRO" id="PR:Q7SXM0"/>
<dbReference type="Proteomes" id="UP000000437">
    <property type="component" value="Chromosome 7"/>
</dbReference>
<dbReference type="GO" id="GO:0005694">
    <property type="term" value="C:chromosome"/>
    <property type="evidence" value="ECO:0007669"/>
    <property type="project" value="UniProtKB-SubCell"/>
</dbReference>
<dbReference type="GO" id="GO:0005737">
    <property type="term" value="C:cytoplasm"/>
    <property type="evidence" value="ECO:0007669"/>
    <property type="project" value="UniProtKB-SubCell"/>
</dbReference>
<dbReference type="GO" id="GO:0005634">
    <property type="term" value="C:nucleus"/>
    <property type="evidence" value="ECO:0007669"/>
    <property type="project" value="UniProtKB-SubCell"/>
</dbReference>
<dbReference type="GO" id="GO:0004407">
    <property type="term" value="F:histone deacetylase activity"/>
    <property type="evidence" value="ECO:0000250"/>
    <property type="project" value="UniProtKB"/>
</dbReference>
<dbReference type="GO" id="GO:0141221">
    <property type="term" value="F:histone deacetylase activity, hydrolytic mechanism"/>
    <property type="evidence" value="ECO:0007669"/>
    <property type="project" value="UniProtKB-EC"/>
</dbReference>
<dbReference type="GO" id="GO:0160009">
    <property type="term" value="F:histone decrotonylase activity"/>
    <property type="evidence" value="ECO:0000250"/>
    <property type="project" value="UniProtKB"/>
</dbReference>
<dbReference type="GO" id="GO:0046872">
    <property type="term" value="F:metal ion binding"/>
    <property type="evidence" value="ECO:0007669"/>
    <property type="project" value="UniProtKB-KW"/>
</dbReference>
<dbReference type="GO" id="GO:0007417">
    <property type="term" value="P:central nervous system development"/>
    <property type="evidence" value="ECO:0000315"/>
    <property type="project" value="ZFIN"/>
</dbReference>
<dbReference type="GO" id="GO:0031507">
    <property type="term" value="P:heterochromatin formation"/>
    <property type="evidence" value="ECO:0000318"/>
    <property type="project" value="GO_Central"/>
</dbReference>
<dbReference type="GO" id="GO:0070050">
    <property type="term" value="P:neuron cellular homeostasis"/>
    <property type="evidence" value="ECO:0000315"/>
    <property type="project" value="ZFIN"/>
</dbReference>
<dbReference type="CDD" id="cd10000">
    <property type="entry name" value="HDAC8"/>
    <property type="match status" value="1"/>
</dbReference>
<dbReference type="FunFam" id="3.40.800.20:FF:000006">
    <property type="entry name" value="Histone deacetylase 8"/>
    <property type="match status" value="1"/>
</dbReference>
<dbReference type="Gene3D" id="3.40.800.20">
    <property type="entry name" value="Histone deacetylase domain"/>
    <property type="match status" value="1"/>
</dbReference>
<dbReference type="InterPro" id="IPR050284">
    <property type="entry name" value="HDAC_PDAC"/>
</dbReference>
<dbReference type="InterPro" id="IPR000286">
    <property type="entry name" value="His_deacetylse"/>
</dbReference>
<dbReference type="InterPro" id="IPR003084">
    <property type="entry name" value="His_deacetylse_1"/>
</dbReference>
<dbReference type="InterPro" id="IPR023801">
    <property type="entry name" value="His_deacetylse_dom"/>
</dbReference>
<dbReference type="InterPro" id="IPR037138">
    <property type="entry name" value="His_deacetylse_dom_sf"/>
</dbReference>
<dbReference type="InterPro" id="IPR023696">
    <property type="entry name" value="Ureohydrolase_dom_sf"/>
</dbReference>
<dbReference type="PANTHER" id="PTHR10625:SF14">
    <property type="entry name" value="HISTONE DEACETYLASE 8"/>
    <property type="match status" value="1"/>
</dbReference>
<dbReference type="PANTHER" id="PTHR10625">
    <property type="entry name" value="HISTONE DEACETYLASE HDAC1-RELATED"/>
    <property type="match status" value="1"/>
</dbReference>
<dbReference type="Pfam" id="PF00850">
    <property type="entry name" value="Hist_deacetyl"/>
    <property type="match status" value="1"/>
</dbReference>
<dbReference type="PIRSF" id="PIRSF037913">
    <property type="entry name" value="His_deacetylse_1"/>
    <property type="match status" value="1"/>
</dbReference>
<dbReference type="PRINTS" id="PR01270">
    <property type="entry name" value="HDASUPER"/>
</dbReference>
<dbReference type="PRINTS" id="PR01271">
    <property type="entry name" value="HISDACETLASE"/>
</dbReference>
<dbReference type="SUPFAM" id="SSF52768">
    <property type="entry name" value="Arginase/deacetylase"/>
    <property type="match status" value="1"/>
</dbReference>
<feature type="chain" id="PRO_0000389509" description="Histone deacetylase 8">
    <location>
        <begin position="1"/>
        <end position="378"/>
    </location>
</feature>
<feature type="region of interest" description="Histone deacetylase">
    <location>
        <begin position="15"/>
        <end position="325"/>
    </location>
</feature>
<feature type="active site" description="Proton acceptor" evidence="1">
    <location>
        <position position="144"/>
    </location>
</feature>
<feature type="binding site" evidence="1">
    <location>
        <position position="102"/>
    </location>
    <ligand>
        <name>substrate</name>
    </ligand>
</feature>
<feature type="binding site" evidence="1">
    <location>
        <position position="152"/>
    </location>
    <ligand>
        <name>substrate</name>
    </ligand>
</feature>
<feature type="binding site" evidence="1">
    <location>
        <position position="179"/>
    </location>
    <ligand>
        <name>a divalent metal cation</name>
        <dbReference type="ChEBI" id="CHEBI:60240"/>
    </ligand>
</feature>
<feature type="binding site" evidence="1">
    <location>
        <position position="181"/>
    </location>
    <ligand>
        <name>a divalent metal cation</name>
        <dbReference type="ChEBI" id="CHEBI:60240"/>
    </ligand>
</feature>
<feature type="binding site" evidence="1">
    <location>
        <position position="268"/>
    </location>
    <ligand>
        <name>a divalent metal cation</name>
        <dbReference type="ChEBI" id="CHEBI:60240"/>
    </ligand>
</feature>
<feature type="binding site" evidence="1">
    <location>
        <position position="307"/>
    </location>
    <ligand>
        <name>substrate</name>
    </ligand>
</feature>
<accession>Q7SXM0</accession>